<gene>
    <name evidence="1" type="primary">astD</name>
    <name type="ordered locus">CV_1499</name>
</gene>
<comment type="function">
    <text evidence="1">Catalyzes the NAD-dependent reduction of succinylglutamate semialdehyde into succinylglutamate.</text>
</comment>
<comment type="catalytic activity">
    <reaction evidence="1">
        <text>N-succinyl-L-glutamate 5-semialdehyde + NAD(+) + H2O = N-succinyl-L-glutamate + NADH + 2 H(+)</text>
        <dbReference type="Rhea" id="RHEA:10812"/>
        <dbReference type="ChEBI" id="CHEBI:15377"/>
        <dbReference type="ChEBI" id="CHEBI:15378"/>
        <dbReference type="ChEBI" id="CHEBI:57540"/>
        <dbReference type="ChEBI" id="CHEBI:57945"/>
        <dbReference type="ChEBI" id="CHEBI:58520"/>
        <dbReference type="ChEBI" id="CHEBI:58763"/>
        <dbReference type="EC" id="1.2.1.71"/>
    </reaction>
</comment>
<comment type="pathway">
    <text evidence="1">Amino-acid degradation; L-arginine degradation via AST pathway; L-glutamate and succinate from L-arginine: step 4/5.</text>
</comment>
<comment type="similarity">
    <text evidence="1">Belongs to the aldehyde dehydrogenase family. AstD subfamily.</text>
</comment>
<accession>Q7NXX7</accession>
<protein>
    <recommendedName>
        <fullName evidence="1">N-succinylglutamate 5-semialdehyde dehydrogenase</fullName>
        <ecNumber evidence="1">1.2.1.71</ecNumber>
    </recommendedName>
    <alternativeName>
        <fullName evidence="1">Succinylglutamic semialdehyde dehydrogenase</fullName>
        <shortName evidence="1">SGSD</shortName>
    </alternativeName>
</protein>
<sequence>MSSLFIDGKWLAGDGEAMAKTNPADNAPLWQGRAASAAQVDAAVRAARAAFPAWARMGLEERAKVVRRFGERLTERKAELARVIAQETGKPLWEATTEVTTMVGKIDISLKALAERTGERAAAMGDAQAVLRHKPHGVVAVFGPYNFPGHLPNGHIVPALLAGNSVIFKPSELTPWTAEETVKLWAEAGLPAGVIGLVQGAKDTGVALAGHEGLDGLFFTGSSATGALLHKQFSGRPDKILALEMGGNNPLIVGEVADVDGAVHHVIQSAFVSAGQRCTCARRLLVPQGEWGDAFVARLVEVAGKLRVGKFDAEPAPFLGAVISNAAADALLKAQDDLVAAGGTPLLAMRRLEEGAAMLTPGIIDTTAAVRPDEEFFGPLLQVIRYADFDQAIAIANDTRFGLAGGVLSDSRELYDRYWLESRAGVVNWNKPLTGASSAAPFGGIGASGNHRPSAYYAADYCAYPVASLECDSLALPAQLSPGIVL</sequence>
<dbReference type="EC" id="1.2.1.71" evidence="1"/>
<dbReference type="EMBL" id="AE016825">
    <property type="protein sequence ID" value="AAQ59174.1"/>
    <property type="molecule type" value="Genomic_DNA"/>
</dbReference>
<dbReference type="RefSeq" id="WP_011135051.1">
    <property type="nucleotide sequence ID" value="NC_005085.1"/>
</dbReference>
<dbReference type="SMR" id="Q7NXX7"/>
<dbReference type="STRING" id="243365.CV_1499"/>
<dbReference type="KEGG" id="cvi:CV_1499"/>
<dbReference type="eggNOG" id="COG1012">
    <property type="taxonomic scope" value="Bacteria"/>
</dbReference>
<dbReference type="HOGENOM" id="CLU_005391_1_0_4"/>
<dbReference type="OrthoDB" id="6187633at2"/>
<dbReference type="UniPathway" id="UPA00185">
    <property type="reaction ID" value="UER00282"/>
</dbReference>
<dbReference type="Proteomes" id="UP000001424">
    <property type="component" value="Chromosome"/>
</dbReference>
<dbReference type="GO" id="GO:0043824">
    <property type="term" value="F:succinylglutamate-semialdehyde dehydrogenase activity"/>
    <property type="evidence" value="ECO:0007669"/>
    <property type="project" value="UniProtKB-EC"/>
</dbReference>
<dbReference type="GO" id="GO:0019544">
    <property type="term" value="P:arginine catabolic process to glutamate"/>
    <property type="evidence" value="ECO:0007669"/>
    <property type="project" value="UniProtKB-UniRule"/>
</dbReference>
<dbReference type="GO" id="GO:0019545">
    <property type="term" value="P:arginine catabolic process to succinate"/>
    <property type="evidence" value="ECO:0007669"/>
    <property type="project" value="UniProtKB-UniRule"/>
</dbReference>
<dbReference type="CDD" id="cd07095">
    <property type="entry name" value="ALDH_SGSD_AstD"/>
    <property type="match status" value="1"/>
</dbReference>
<dbReference type="FunFam" id="3.40.309.10:FF:000013">
    <property type="entry name" value="N-succinylglutamate 5-semialdehyde dehydrogenase"/>
    <property type="match status" value="1"/>
</dbReference>
<dbReference type="FunFam" id="3.40.605.10:FF:000010">
    <property type="entry name" value="N-succinylglutamate 5-semialdehyde dehydrogenase"/>
    <property type="match status" value="1"/>
</dbReference>
<dbReference type="Gene3D" id="3.40.605.10">
    <property type="entry name" value="Aldehyde Dehydrogenase, Chain A, domain 1"/>
    <property type="match status" value="1"/>
</dbReference>
<dbReference type="Gene3D" id="3.40.309.10">
    <property type="entry name" value="Aldehyde Dehydrogenase, Chain A, domain 2"/>
    <property type="match status" value="1"/>
</dbReference>
<dbReference type="HAMAP" id="MF_01174">
    <property type="entry name" value="Aldedh_AstD"/>
    <property type="match status" value="1"/>
</dbReference>
<dbReference type="InterPro" id="IPR016161">
    <property type="entry name" value="Ald_DH/histidinol_DH"/>
</dbReference>
<dbReference type="InterPro" id="IPR016163">
    <property type="entry name" value="Ald_DH_C"/>
</dbReference>
<dbReference type="InterPro" id="IPR016160">
    <property type="entry name" value="Ald_DH_CS_CYS"/>
</dbReference>
<dbReference type="InterPro" id="IPR029510">
    <property type="entry name" value="Ald_DH_CS_GLU"/>
</dbReference>
<dbReference type="InterPro" id="IPR016162">
    <property type="entry name" value="Ald_DH_N"/>
</dbReference>
<dbReference type="InterPro" id="IPR015590">
    <property type="entry name" value="Aldehyde_DH_dom"/>
</dbReference>
<dbReference type="InterPro" id="IPR017649">
    <property type="entry name" value="SuccinylGlu_semiald_DH_AstD"/>
</dbReference>
<dbReference type="NCBIfam" id="TIGR03240">
    <property type="entry name" value="arg_catab_astD"/>
    <property type="match status" value="1"/>
</dbReference>
<dbReference type="NCBIfam" id="NF006992">
    <property type="entry name" value="PRK09457.1"/>
    <property type="match status" value="1"/>
</dbReference>
<dbReference type="PANTHER" id="PTHR11699">
    <property type="entry name" value="ALDEHYDE DEHYDROGENASE-RELATED"/>
    <property type="match status" value="1"/>
</dbReference>
<dbReference type="Pfam" id="PF00171">
    <property type="entry name" value="Aldedh"/>
    <property type="match status" value="1"/>
</dbReference>
<dbReference type="SUPFAM" id="SSF53720">
    <property type="entry name" value="ALDH-like"/>
    <property type="match status" value="1"/>
</dbReference>
<dbReference type="PROSITE" id="PS00070">
    <property type="entry name" value="ALDEHYDE_DEHYDR_CYS"/>
    <property type="match status" value="1"/>
</dbReference>
<dbReference type="PROSITE" id="PS00687">
    <property type="entry name" value="ALDEHYDE_DEHYDR_GLU"/>
    <property type="match status" value="1"/>
</dbReference>
<organism>
    <name type="scientific">Chromobacterium violaceum (strain ATCC 12472 / DSM 30191 / JCM 1249 / CCUG 213 / NBRC 12614 / NCIMB 9131 / NCTC 9757 / MK)</name>
    <dbReference type="NCBI Taxonomy" id="243365"/>
    <lineage>
        <taxon>Bacteria</taxon>
        <taxon>Pseudomonadati</taxon>
        <taxon>Pseudomonadota</taxon>
        <taxon>Betaproteobacteria</taxon>
        <taxon>Neisseriales</taxon>
        <taxon>Chromobacteriaceae</taxon>
        <taxon>Chromobacterium</taxon>
    </lineage>
</organism>
<evidence type="ECO:0000255" key="1">
    <source>
        <dbReference type="HAMAP-Rule" id="MF_01174"/>
    </source>
</evidence>
<feature type="chain" id="PRO_0000262396" description="N-succinylglutamate 5-semialdehyde dehydrogenase">
    <location>
        <begin position="1"/>
        <end position="486"/>
    </location>
</feature>
<feature type="active site" evidence="1">
    <location>
        <position position="244"/>
    </location>
</feature>
<feature type="active site" evidence="1">
    <location>
        <position position="278"/>
    </location>
</feature>
<feature type="binding site" evidence="1">
    <location>
        <begin position="221"/>
        <end position="226"/>
    </location>
    <ligand>
        <name>NAD(+)</name>
        <dbReference type="ChEBI" id="CHEBI:57540"/>
    </ligand>
</feature>
<name>ASTD_CHRVO</name>
<reference key="1">
    <citation type="journal article" date="2003" name="Proc. Natl. Acad. Sci. U.S.A.">
        <title>The complete genome sequence of Chromobacterium violaceum reveals remarkable and exploitable bacterial adaptability.</title>
        <authorList>
            <person name="Vasconcelos A.T.R."/>
            <person name="de Almeida D.F."/>
            <person name="Hungria M."/>
            <person name="Guimaraes C.T."/>
            <person name="Antonio R.V."/>
            <person name="Almeida F.C."/>
            <person name="de Almeida L.G.P."/>
            <person name="de Almeida R."/>
            <person name="Alves-Gomes J.A."/>
            <person name="Andrade E.M."/>
            <person name="Araripe J."/>
            <person name="de Araujo M.F.F."/>
            <person name="Astolfi-Filho S."/>
            <person name="Azevedo V."/>
            <person name="Baptista A.J."/>
            <person name="Bataus L.A.M."/>
            <person name="Batista J.S."/>
            <person name="Belo A."/>
            <person name="van den Berg C."/>
            <person name="Bogo M."/>
            <person name="Bonatto S."/>
            <person name="Bordignon J."/>
            <person name="Brigido M.M."/>
            <person name="Brito C.A."/>
            <person name="Brocchi M."/>
            <person name="Burity H.A."/>
            <person name="Camargo A.A."/>
            <person name="Cardoso D.D.P."/>
            <person name="Carneiro N.P."/>
            <person name="Carraro D.M."/>
            <person name="Carvalho C.M.B."/>
            <person name="Cascardo J.C.M."/>
            <person name="Cavada B.S."/>
            <person name="Chueire L.M.O."/>
            <person name="Creczynski-Pasa T.B."/>
            <person name="Cunha-Junior N.C."/>
            <person name="Fagundes N."/>
            <person name="Falcao C.L."/>
            <person name="Fantinatti F."/>
            <person name="Farias I.P."/>
            <person name="Felipe M.S.S."/>
            <person name="Ferrari L.P."/>
            <person name="Ferro J.A."/>
            <person name="Ferro M.I.T."/>
            <person name="Franco G.R."/>
            <person name="Freitas N.S.A."/>
            <person name="Furlan L.R."/>
            <person name="Gazzinelli R.T."/>
            <person name="Gomes E.A."/>
            <person name="Goncalves P.R."/>
            <person name="Grangeiro T.B."/>
            <person name="Grattapaglia D."/>
            <person name="Grisard E.C."/>
            <person name="Hanna E.S."/>
            <person name="Jardim S.N."/>
            <person name="Laurino J."/>
            <person name="Leoi L.C.T."/>
            <person name="Lima L.F.A."/>
            <person name="Loureiro M.F."/>
            <person name="Lyra M.C.C.P."/>
            <person name="Madeira H.M.F."/>
            <person name="Manfio G.P."/>
            <person name="Maranhao A.Q."/>
            <person name="Martins W.S."/>
            <person name="di Mauro S.M.Z."/>
            <person name="de Medeiros S.R.B."/>
            <person name="Meissner R.V."/>
            <person name="Moreira M.A.M."/>
            <person name="Nascimento F.F."/>
            <person name="Nicolas M.F."/>
            <person name="Oliveira J.G."/>
            <person name="Oliveira S.C."/>
            <person name="Paixao R.F.C."/>
            <person name="Parente J.A."/>
            <person name="Pedrosa F.O."/>
            <person name="Pena S.D.J."/>
            <person name="Pereira J.O."/>
            <person name="Pereira M."/>
            <person name="Pinto L.S.R.C."/>
            <person name="Pinto L.S."/>
            <person name="Porto J.I.R."/>
            <person name="Potrich D.P."/>
            <person name="Ramalho-Neto C.E."/>
            <person name="Reis A.M.M."/>
            <person name="Rigo L.U."/>
            <person name="Rondinelli E."/>
            <person name="Santos E.B.P."/>
            <person name="Santos F.R."/>
            <person name="Schneider M.P.C."/>
            <person name="Seuanez H.N."/>
            <person name="Silva A.M.R."/>
            <person name="da Silva A.L.C."/>
            <person name="Silva D.W."/>
            <person name="Silva R."/>
            <person name="Simoes I.C."/>
            <person name="Simon D."/>
            <person name="Soares C.M.A."/>
            <person name="Soares R.B.A."/>
            <person name="Souza E.M."/>
            <person name="Souza K.R.L."/>
            <person name="Souza R.C."/>
            <person name="Steffens M.B.R."/>
            <person name="Steindel M."/>
            <person name="Teixeira S.R."/>
            <person name="Urmenyi T."/>
            <person name="Vettore A."/>
            <person name="Wassem R."/>
            <person name="Zaha A."/>
            <person name="Simpson A.J.G."/>
        </authorList>
    </citation>
    <scope>NUCLEOTIDE SEQUENCE [LARGE SCALE GENOMIC DNA]</scope>
    <source>
        <strain>ATCC 12472 / DSM 30191 / JCM 1249 / CCUG 213 / NBRC 12614 / NCIMB 9131 / NCTC 9757 / MK</strain>
    </source>
</reference>
<keyword id="KW-0056">Arginine metabolism</keyword>
<keyword id="KW-0520">NAD</keyword>
<keyword id="KW-0560">Oxidoreductase</keyword>
<keyword id="KW-1185">Reference proteome</keyword>
<proteinExistence type="inferred from homology"/>